<dbReference type="EMBL" id="AC140350">
    <property type="status" value="NOT_ANNOTATED_CDS"/>
    <property type="molecule type" value="Genomic_DNA"/>
</dbReference>
<dbReference type="EMBL" id="CH466608">
    <property type="protein sequence ID" value="EDL07532.1"/>
    <property type="molecule type" value="Genomic_DNA"/>
</dbReference>
<dbReference type="EMBL" id="CH466577">
    <property type="protein sequence ID" value="EDL05138.1"/>
    <property type="molecule type" value="Genomic_DNA"/>
</dbReference>
<dbReference type="EMBL" id="BC115807">
    <property type="protein sequence ID" value="AAI15808.1"/>
    <property type="molecule type" value="mRNA"/>
</dbReference>
<dbReference type="EMBL" id="BC100487">
    <property type="status" value="NOT_ANNOTATED_CDS"/>
    <property type="molecule type" value="mRNA"/>
</dbReference>
<dbReference type="CCDS" id="CCDS79886.1">
    <molecule id="Q0VG62-2"/>
</dbReference>
<dbReference type="CCDS" id="CCDS84610.1">
    <molecule id="Q0VG62-1"/>
</dbReference>
<dbReference type="RefSeq" id="NP_001093144.1">
    <molecule id="Q0VG62-2"/>
    <property type="nucleotide sequence ID" value="NM_001099674.1"/>
</dbReference>
<dbReference type="RefSeq" id="NP_001334135.1">
    <molecule id="Q0VG62-1"/>
    <property type="nucleotide sequence ID" value="NM_001347206.1"/>
</dbReference>
<dbReference type="SMR" id="Q0VG62"/>
<dbReference type="FunCoup" id="Q0VG62">
    <property type="interactions" value="2492"/>
</dbReference>
<dbReference type="IntAct" id="Q0VG62">
    <property type="interactions" value="1"/>
</dbReference>
<dbReference type="MINT" id="Q0VG62"/>
<dbReference type="STRING" id="10090.ENSMUSP00000104002"/>
<dbReference type="iPTMnet" id="Q0VG62"/>
<dbReference type="PhosphoSitePlus" id="Q0VG62"/>
<dbReference type="PaxDb" id="10090-ENSMUSP00000104002"/>
<dbReference type="ProteomicsDB" id="340892"/>
<dbReference type="Pumba" id="Q0VG62"/>
<dbReference type="Antibodypedia" id="59064">
    <property type="antibodies" value="30 antibodies from 8 providers"/>
</dbReference>
<dbReference type="Ensembl" id="ENSMUST00000108365.4">
    <molecule id="Q0VG62-1"/>
    <property type="protein sequence ID" value="ENSMUSP00000104002.3"/>
    <property type="gene ID" value="ENSMUSG00000078784.9"/>
</dbReference>
<dbReference type="Ensembl" id="ENSMUST00000185384.7">
    <molecule id="Q0VG62-2"/>
    <property type="protein sequence ID" value="ENSMUSP00000139512.2"/>
    <property type="gene ID" value="ENSMUSG00000078784.9"/>
</dbReference>
<dbReference type="GeneID" id="69126"/>
<dbReference type="KEGG" id="mmu:69126"/>
<dbReference type="UCSC" id="uc008oql.1">
    <molecule id="Q0VG62-2"/>
    <property type="organism name" value="mouse"/>
</dbReference>
<dbReference type="AGR" id="MGI:1916376"/>
<dbReference type="CTD" id="401466"/>
<dbReference type="MGI" id="MGI:1916376">
    <property type="gene designation" value="Rbis"/>
</dbReference>
<dbReference type="VEuPathDB" id="HostDB:ENSMUSG00000078784"/>
<dbReference type="eggNOG" id="ENOG502S982">
    <property type="taxonomic scope" value="Eukaryota"/>
</dbReference>
<dbReference type="GeneTree" id="ENSGT00390000015564"/>
<dbReference type="HOGENOM" id="CLU_152931_0_0_1"/>
<dbReference type="InParanoid" id="Q0VG62"/>
<dbReference type="OrthoDB" id="52711at9989"/>
<dbReference type="PhylomeDB" id="Q0VG62"/>
<dbReference type="TreeFam" id="TF330773"/>
<dbReference type="BioGRID-ORCS" id="69126">
    <property type="hits" value="8 hits in 38 CRISPR screens"/>
</dbReference>
<dbReference type="ChiTaRS" id="Rbis">
    <property type="organism name" value="mouse"/>
</dbReference>
<dbReference type="PRO" id="PR:Q0VG62"/>
<dbReference type="Proteomes" id="UP000000589">
    <property type="component" value="Chromosome 3"/>
</dbReference>
<dbReference type="RNAct" id="Q0VG62">
    <property type="molecule type" value="protein"/>
</dbReference>
<dbReference type="Bgee" id="ENSMUSG00000078784">
    <property type="expression patterns" value="Expressed in epiblast cell in embryo and 228 other cell types or tissues"/>
</dbReference>
<dbReference type="ExpressionAtlas" id="Q0VG62">
    <property type="expression patterns" value="baseline and differential"/>
</dbReference>
<dbReference type="GO" id="GO:0005829">
    <property type="term" value="C:cytosol"/>
    <property type="evidence" value="ECO:0007669"/>
    <property type="project" value="Ensembl"/>
</dbReference>
<dbReference type="GO" id="GO:0005730">
    <property type="term" value="C:nucleolus"/>
    <property type="evidence" value="ECO:0000250"/>
    <property type="project" value="UniProtKB"/>
</dbReference>
<dbReference type="GO" id="GO:0005654">
    <property type="term" value="C:nucleoplasm"/>
    <property type="evidence" value="ECO:0007669"/>
    <property type="project" value="Ensembl"/>
</dbReference>
<dbReference type="GO" id="GO:0042254">
    <property type="term" value="P:ribosome biogenesis"/>
    <property type="evidence" value="ECO:0000250"/>
    <property type="project" value="UniProtKB"/>
</dbReference>
<dbReference type="InterPro" id="IPR031389">
    <property type="entry name" value="RBIS"/>
</dbReference>
<dbReference type="PANTHER" id="PTHR35544">
    <property type="entry name" value="RIBOSOMAL BIOGENESIS FACTOR"/>
    <property type="match status" value="1"/>
</dbReference>
<dbReference type="PANTHER" id="PTHR35544:SF4">
    <property type="entry name" value="RIBOSOMAL BIOGENESIS FACTOR"/>
    <property type="match status" value="1"/>
</dbReference>
<dbReference type="Pfam" id="PF15679">
    <property type="entry name" value="DUF4665"/>
    <property type="match status" value="1"/>
</dbReference>
<keyword id="KW-0007">Acetylation</keyword>
<keyword id="KW-0025">Alternative splicing</keyword>
<keyword id="KW-0539">Nucleus</keyword>
<keyword id="KW-0597">Phosphoprotein</keyword>
<keyword id="KW-1185">Reference proteome</keyword>
<reference key="1">
    <citation type="submission" date="2005-09" db="EMBL/GenBank/DDBJ databases">
        <authorList>
            <person name="Mural R.J."/>
            <person name="Adams M.D."/>
            <person name="Myers E.W."/>
            <person name="Smith H.O."/>
            <person name="Venter J.C."/>
        </authorList>
    </citation>
    <scope>NUCLEOTIDE SEQUENCE [LARGE SCALE GENOMIC DNA]</scope>
</reference>
<reference key="2">
    <citation type="journal article" date="2009" name="PLoS Biol.">
        <title>Lineage-specific biology revealed by a finished genome assembly of the mouse.</title>
        <authorList>
            <person name="Church D.M."/>
            <person name="Goodstadt L."/>
            <person name="Hillier L.W."/>
            <person name="Zody M.C."/>
            <person name="Goldstein S."/>
            <person name="She X."/>
            <person name="Bult C.J."/>
            <person name="Agarwala R."/>
            <person name="Cherry J.L."/>
            <person name="DiCuccio M."/>
            <person name="Hlavina W."/>
            <person name="Kapustin Y."/>
            <person name="Meric P."/>
            <person name="Maglott D."/>
            <person name="Birtle Z."/>
            <person name="Marques A.C."/>
            <person name="Graves T."/>
            <person name="Zhou S."/>
            <person name="Teague B."/>
            <person name="Potamousis K."/>
            <person name="Churas C."/>
            <person name="Place M."/>
            <person name="Herschleb J."/>
            <person name="Runnheim R."/>
            <person name="Forrest D."/>
            <person name="Amos-Landgraf J."/>
            <person name="Schwartz D.C."/>
            <person name="Cheng Z."/>
            <person name="Lindblad-Toh K."/>
            <person name="Eichler E.E."/>
            <person name="Ponting C.P."/>
        </authorList>
    </citation>
    <scope>NUCLEOTIDE SEQUENCE [LARGE SCALE GENOMIC DNA]</scope>
    <source>
        <strain>C57BL/6J</strain>
    </source>
</reference>
<reference key="3">
    <citation type="journal article" date="2004" name="Genome Res.">
        <title>The status, quality, and expansion of the NIH full-length cDNA project: the Mammalian Gene Collection (MGC).</title>
        <authorList>
            <consortium name="The MGC Project Team"/>
        </authorList>
    </citation>
    <scope>NUCLEOTIDE SEQUENCE [LARGE SCALE MRNA] (ISOFORMS 1 AND 2)</scope>
</reference>
<reference key="4">
    <citation type="journal article" date="2010" name="Cell">
        <title>A tissue-specific atlas of mouse protein phosphorylation and expression.</title>
        <authorList>
            <person name="Huttlin E.L."/>
            <person name="Jedrychowski M.P."/>
            <person name="Elias J.E."/>
            <person name="Goswami T."/>
            <person name="Rad R."/>
            <person name="Beausoleil S.A."/>
            <person name="Villen J."/>
            <person name="Haas W."/>
            <person name="Sowa M.E."/>
            <person name="Gygi S.P."/>
        </authorList>
    </citation>
    <scope>IDENTIFICATION BY MASS SPECTROMETRY [LARGE SCALE ANALYSIS]</scope>
    <source>
        <tissue>Spleen</tissue>
    </source>
</reference>
<gene>
    <name type="primary">Rbis</name>
</gene>
<name>RBIS_MOUSE</name>
<proteinExistence type="evidence at protein level"/>
<comment type="function">
    <text evidence="1">Trans-acting factor in ribosome biogenesis required for efficient 40S and 60S subunit production.</text>
</comment>
<comment type="subunit">
    <text evidence="1">Associates with the pre-60S ribosomal particles.</text>
</comment>
<comment type="subcellular location">
    <subcellularLocation>
        <location evidence="1">Nucleus</location>
        <location evidence="1">Nucleolus</location>
    </subcellularLocation>
</comment>
<comment type="alternative products">
    <event type="alternative splicing"/>
    <isoform>
        <id>Q0VG62-2</id>
        <name>1</name>
        <sequence type="displayed"/>
    </isoform>
    <isoform>
        <id>Q0VG62-1</id>
        <name>2</name>
        <sequence type="described" ref="VSP_060139"/>
    </isoform>
</comment>
<feature type="chain" id="PRO_0000324605" description="Ribosomal biogenesis factor">
    <location>
        <begin position="1"/>
        <end position="97"/>
    </location>
</feature>
<feature type="modified residue" description="Phosphoserine" evidence="1">
    <location>
        <position position="19"/>
    </location>
</feature>
<feature type="modified residue" description="N6-acetyllysine" evidence="1">
    <location>
        <position position="21"/>
    </location>
</feature>
<feature type="modified residue" description="Phosphoserine" evidence="1">
    <location>
        <position position="69"/>
    </location>
</feature>
<feature type="splice variant" id="VSP_060139" description="In isoform 2.">
    <original>M</original>
    <variation>MLAAAAPRALFCQLLVLYRFLVGDRTPGVPRPETLRPPLSRTM</variation>
    <location>
        <position position="1"/>
    </location>
</feature>
<protein>
    <recommendedName>
        <fullName evidence="2">Ribosomal biogenesis factor</fullName>
    </recommendedName>
</protein>
<organism>
    <name type="scientific">Mus musculus</name>
    <name type="common">Mouse</name>
    <dbReference type="NCBI Taxonomy" id="10090"/>
    <lineage>
        <taxon>Eukaryota</taxon>
        <taxon>Metazoa</taxon>
        <taxon>Chordata</taxon>
        <taxon>Craniata</taxon>
        <taxon>Vertebrata</taxon>
        <taxon>Euteleostomi</taxon>
        <taxon>Mammalia</taxon>
        <taxon>Eutheria</taxon>
        <taxon>Euarchontoglires</taxon>
        <taxon>Glires</taxon>
        <taxon>Rodentia</taxon>
        <taxon>Myomorpha</taxon>
        <taxon>Muroidea</taxon>
        <taxon>Muridae</taxon>
        <taxon>Murinae</taxon>
        <taxon>Mus</taxon>
        <taxon>Mus</taxon>
    </lineage>
</organism>
<accession>Q0VG62</accession>
<accession>G3UW58</accession>
<sequence length="97" mass="11163">MAKNKLKGQKSRNVFHIASHKTFKAKNKAKPVTTNLKKINIMNHEKVNRMNRAFVNIQKELANFSKSLSLKSVQKELKHHENEPANVDEATRLMAQL</sequence>
<evidence type="ECO:0000250" key="1">
    <source>
        <dbReference type="UniProtKB" id="Q8N0T1"/>
    </source>
</evidence>
<evidence type="ECO:0000305" key="2"/>